<dbReference type="EMBL" id="CR555306">
    <property type="protein sequence ID" value="CAI08303.1"/>
    <property type="molecule type" value="Genomic_DNA"/>
</dbReference>
<dbReference type="RefSeq" id="WP_011237993.1">
    <property type="nucleotide sequence ID" value="NC_006513.1"/>
</dbReference>
<dbReference type="SMR" id="Q5P311"/>
<dbReference type="STRING" id="76114.ebC9"/>
<dbReference type="KEGG" id="eba:ebC9"/>
<dbReference type="eggNOG" id="COG0257">
    <property type="taxonomic scope" value="Bacteria"/>
</dbReference>
<dbReference type="HOGENOM" id="CLU_135723_6_2_4"/>
<dbReference type="Proteomes" id="UP000006552">
    <property type="component" value="Chromosome"/>
</dbReference>
<dbReference type="GO" id="GO:0005737">
    <property type="term" value="C:cytoplasm"/>
    <property type="evidence" value="ECO:0007669"/>
    <property type="project" value="UniProtKB-ARBA"/>
</dbReference>
<dbReference type="GO" id="GO:1990904">
    <property type="term" value="C:ribonucleoprotein complex"/>
    <property type="evidence" value="ECO:0007669"/>
    <property type="project" value="UniProtKB-KW"/>
</dbReference>
<dbReference type="GO" id="GO:0005840">
    <property type="term" value="C:ribosome"/>
    <property type="evidence" value="ECO:0007669"/>
    <property type="project" value="UniProtKB-KW"/>
</dbReference>
<dbReference type="GO" id="GO:0003735">
    <property type="term" value="F:structural constituent of ribosome"/>
    <property type="evidence" value="ECO:0007669"/>
    <property type="project" value="InterPro"/>
</dbReference>
<dbReference type="GO" id="GO:0006412">
    <property type="term" value="P:translation"/>
    <property type="evidence" value="ECO:0007669"/>
    <property type="project" value="UniProtKB-UniRule"/>
</dbReference>
<dbReference type="HAMAP" id="MF_00251">
    <property type="entry name" value="Ribosomal_bL36"/>
    <property type="match status" value="1"/>
</dbReference>
<dbReference type="InterPro" id="IPR000473">
    <property type="entry name" value="Ribosomal_bL36"/>
</dbReference>
<dbReference type="InterPro" id="IPR035977">
    <property type="entry name" value="Ribosomal_bL36_sp"/>
</dbReference>
<dbReference type="NCBIfam" id="TIGR01022">
    <property type="entry name" value="rpmJ_bact"/>
    <property type="match status" value="1"/>
</dbReference>
<dbReference type="PANTHER" id="PTHR42888">
    <property type="entry name" value="50S RIBOSOMAL PROTEIN L36, CHLOROPLASTIC"/>
    <property type="match status" value="1"/>
</dbReference>
<dbReference type="PANTHER" id="PTHR42888:SF1">
    <property type="entry name" value="LARGE RIBOSOMAL SUBUNIT PROTEIN BL36C"/>
    <property type="match status" value="1"/>
</dbReference>
<dbReference type="Pfam" id="PF00444">
    <property type="entry name" value="Ribosomal_L36"/>
    <property type="match status" value="1"/>
</dbReference>
<dbReference type="SUPFAM" id="SSF57840">
    <property type="entry name" value="Ribosomal protein L36"/>
    <property type="match status" value="1"/>
</dbReference>
<dbReference type="PROSITE" id="PS00828">
    <property type="entry name" value="RIBOSOMAL_L36"/>
    <property type="match status" value="1"/>
</dbReference>
<accession>Q5P311</accession>
<evidence type="ECO:0000255" key="1">
    <source>
        <dbReference type="HAMAP-Rule" id="MF_00251"/>
    </source>
</evidence>
<evidence type="ECO:0000305" key="2"/>
<sequence length="37" mass="4388">MRVQASVKRLCRNCKIVRRKGVVRVICIDPRHKQRQG</sequence>
<name>RL36_AROAE</name>
<comment type="similarity">
    <text evidence="1">Belongs to the bacterial ribosomal protein bL36 family.</text>
</comment>
<proteinExistence type="inferred from homology"/>
<keyword id="KW-1185">Reference proteome</keyword>
<keyword id="KW-0687">Ribonucleoprotein</keyword>
<keyword id="KW-0689">Ribosomal protein</keyword>
<gene>
    <name evidence="1" type="primary">rpmJ</name>
    <name type="ordered locus">AZOSEA21780</name>
    <name type="ORF">ebC9</name>
</gene>
<feature type="chain" id="PRO_0000302155" description="Large ribosomal subunit protein bL36">
    <location>
        <begin position="1"/>
        <end position="37"/>
    </location>
</feature>
<protein>
    <recommendedName>
        <fullName evidence="1">Large ribosomal subunit protein bL36</fullName>
    </recommendedName>
    <alternativeName>
        <fullName evidence="2">50S ribosomal protein L36</fullName>
    </alternativeName>
</protein>
<organism>
    <name type="scientific">Aromatoleum aromaticum (strain DSM 19018 / LMG 30748 / EbN1)</name>
    <name type="common">Azoarcus sp. (strain EbN1)</name>
    <dbReference type="NCBI Taxonomy" id="76114"/>
    <lineage>
        <taxon>Bacteria</taxon>
        <taxon>Pseudomonadati</taxon>
        <taxon>Pseudomonadota</taxon>
        <taxon>Betaproteobacteria</taxon>
        <taxon>Rhodocyclales</taxon>
        <taxon>Rhodocyclaceae</taxon>
        <taxon>Aromatoleum</taxon>
    </lineage>
</organism>
<reference key="1">
    <citation type="journal article" date="2005" name="Arch. Microbiol.">
        <title>The genome sequence of an anaerobic aromatic-degrading denitrifying bacterium, strain EbN1.</title>
        <authorList>
            <person name="Rabus R."/>
            <person name="Kube M."/>
            <person name="Heider J."/>
            <person name="Beck A."/>
            <person name="Heitmann K."/>
            <person name="Widdel F."/>
            <person name="Reinhardt R."/>
        </authorList>
    </citation>
    <scope>NUCLEOTIDE SEQUENCE [LARGE SCALE GENOMIC DNA]</scope>
    <source>
        <strain>DSM 19018 / LMG 30748 / EbN1</strain>
    </source>
</reference>